<feature type="chain" id="PRO_0000077323" description="Type II restriction enzyme HinfI">
    <location>
        <begin position="1"/>
        <end position="262"/>
    </location>
</feature>
<evidence type="ECO:0000303" key="1">
    <source>
    </source>
</evidence>
<evidence type="ECO:0000305" key="2">
    <source>
    </source>
</evidence>
<sequence>MNDEISDLINQAVSNILINSSSENKLKKLIKTHDVKIHFVPRNYRIFGGILQSMNIQFGNFLEEFMTLLIKSDGRYDILEEYSGKKSNKFQLSTSNDNRIDQFISFCQRSDSINLDEEFPKLLNEVKNDNDTNLSSISHDIDILFRNKETGVIYYLEVKYNDDHDTGKFVDINRKFIKTYAYLVREFPNTEIKPILFFFNNKKMKGNIYVPENTNIRRGKSFFDEFLKIKYEDVDSYIRNLSESPDNIKAFDDLYRKIMAMK</sequence>
<comment type="function">
    <text evidence="1 2">A P subtype restriction enzyme that recognizes the double-stranded sequence 5'-GANTC-3' and cleaves after G-1.</text>
</comment>
<comment type="catalytic activity">
    <reaction>
        <text>Endonucleolytic cleavage of DNA to give specific double-stranded fragments with terminal 5'-phosphates.</text>
        <dbReference type="EC" id="3.1.21.4"/>
    </reaction>
</comment>
<organism>
    <name type="scientific">Haemophilus influenzae</name>
    <dbReference type="NCBI Taxonomy" id="727"/>
    <lineage>
        <taxon>Bacteria</taxon>
        <taxon>Pseudomonadati</taxon>
        <taxon>Pseudomonadota</taxon>
        <taxon>Gammaproteobacteria</taxon>
        <taxon>Pasteurellales</taxon>
        <taxon>Pasteurellaceae</taxon>
        <taxon>Haemophilus</taxon>
    </lineage>
</organism>
<reference key="1">
    <citation type="journal article" date="1988" name="Gene">
        <title>Cloning and sequencing the HinfI restriction and modification genes.</title>
        <authorList>
            <person name="Chandrasegaran S."/>
            <person name="Lunnen K.D."/>
            <person name="Smith H.O."/>
            <person name="Wilson G.G."/>
        </authorList>
    </citation>
    <scope>NUCLEOTIDE SEQUENCE [GENOMIC DNA]</scope>
    <scope>FUNCTION</scope>
    <source>
        <strain>RF</strain>
    </source>
</reference>
<reference key="2">
    <citation type="journal article" date="2003" name="Nucleic Acids Res.">
        <title>A nomenclature for restriction enzymes, DNA methyltransferases, homing endonucleases and their genes.</title>
        <authorList>
            <person name="Roberts R.J."/>
            <person name="Belfort M."/>
            <person name="Bestor T."/>
            <person name="Bhagwat A.S."/>
            <person name="Bickle T.A."/>
            <person name="Bitinaite J."/>
            <person name="Blumenthal R.M."/>
            <person name="Degtyarev S.K."/>
            <person name="Dryden D.T."/>
            <person name="Dybvig K."/>
            <person name="Firman K."/>
            <person name="Gromova E.S."/>
            <person name="Gumport R.I."/>
            <person name="Halford S.E."/>
            <person name="Hattman S."/>
            <person name="Heitman J."/>
            <person name="Hornby D.P."/>
            <person name="Janulaitis A."/>
            <person name="Jeltsch A."/>
            <person name="Josephsen J."/>
            <person name="Kiss A."/>
            <person name="Klaenhammer T.R."/>
            <person name="Kobayashi I."/>
            <person name="Kong H."/>
            <person name="Krueger D.H."/>
            <person name="Lacks S."/>
            <person name="Marinus M.G."/>
            <person name="Miyahara M."/>
            <person name="Morgan R.D."/>
            <person name="Murray N.E."/>
            <person name="Nagaraja V."/>
            <person name="Piekarowicz A."/>
            <person name="Pingoud A."/>
            <person name="Raleigh E."/>
            <person name="Rao D.N."/>
            <person name="Reich N."/>
            <person name="Repin V.E."/>
            <person name="Selker E.U."/>
            <person name="Shaw P.C."/>
            <person name="Stein D.C."/>
            <person name="Stoddard B.L."/>
            <person name="Szybalski W."/>
            <person name="Trautner T.A."/>
            <person name="Van Etten J.L."/>
            <person name="Vitor J.M."/>
            <person name="Wilson G.G."/>
            <person name="Xu S.Y."/>
        </authorList>
    </citation>
    <scope>NOMENCLATURE</scope>
    <scope>SUBTYPE</scope>
</reference>
<accession>P20588</accession>
<keyword id="KW-0255">Endonuclease</keyword>
<keyword id="KW-0378">Hydrolase</keyword>
<keyword id="KW-0540">Nuclease</keyword>
<keyword id="KW-0680">Restriction system</keyword>
<dbReference type="EC" id="3.1.21.4"/>
<dbReference type="EMBL" id="M22862">
    <property type="protein sequence ID" value="AAA24988.1"/>
    <property type="molecule type" value="Genomic_DNA"/>
</dbReference>
<dbReference type="PIR" id="JT0390">
    <property type="entry name" value="JT0390"/>
</dbReference>
<dbReference type="RefSeq" id="WP_021035598.1">
    <property type="nucleotide sequence ID" value="NZ_VOFM01000006.1"/>
</dbReference>
<dbReference type="REBASE" id="1154">
    <property type="entry name" value="HinfI"/>
</dbReference>
<dbReference type="BRENDA" id="3.1.21.4">
    <property type="organism ID" value="2529"/>
</dbReference>
<dbReference type="PRO" id="PR:P20588"/>
<dbReference type="GO" id="GO:0009036">
    <property type="term" value="F:type II site-specific deoxyribonuclease activity"/>
    <property type="evidence" value="ECO:0007669"/>
    <property type="project" value="UniProtKB-EC"/>
</dbReference>
<dbReference type="GO" id="GO:0009307">
    <property type="term" value="P:DNA restriction-modification system"/>
    <property type="evidence" value="ECO:0007669"/>
    <property type="project" value="UniProtKB-KW"/>
</dbReference>
<dbReference type="InterPro" id="IPR054785">
    <property type="entry name" value="HinfI"/>
</dbReference>
<dbReference type="NCBIfam" id="NF045831">
    <property type="entry name" value="restrict_HinfI"/>
    <property type="match status" value="1"/>
</dbReference>
<gene>
    <name type="primary">hinfIR</name>
</gene>
<name>T2F1_HAEIF</name>
<protein>
    <recommendedName>
        <fullName evidence="1">Type II restriction enzyme HinfI</fullName>
        <shortName>R.HinfI</shortName>
        <ecNumber>3.1.21.4</ecNumber>
    </recommendedName>
    <alternativeName>
        <fullName>Endonuclease HinfI</fullName>
    </alternativeName>
    <alternativeName>
        <fullName>Type-2 restriction enzyme HinfI</fullName>
    </alternativeName>
</protein>
<proteinExistence type="predicted"/>